<protein>
    <recommendedName>
        <fullName>Bromodomain-containing protein 7</fullName>
    </recommendedName>
    <alternativeName>
        <fullName>75 kDa bromodomain protein</fullName>
    </alternativeName>
</protein>
<gene>
    <name type="primary">Brd7</name>
    <name type="synonym">Bp75</name>
</gene>
<name>BRD7_MOUSE</name>
<accession>O88665</accession>
<accession>Q3UQ56</accession>
<accession>Q3UU06</accession>
<accession>Q9CT78</accession>
<evidence type="ECO:0000250" key="1"/>
<evidence type="ECO:0000250" key="2">
    <source>
        <dbReference type="UniProtKB" id="Q9NPI1"/>
    </source>
</evidence>
<evidence type="ECO:0000255" key="3"/>
<evidence type="ECO:0000255" key="4">
    <source>
        <dbReference type="PROSITE-ProRule" id="PRU00035"/>
    </source>
</evidence>
<evidence type="ECO:0000256" key="5">
    <source>
        <dbReference type="SAM" id="MobiDB-lite"/>
    </source>
</evidence>
<evidence type="ECO:0000269" key="6">
    <source>
    </source>
</evidence>
<evidence type="ECO:0000269" key="7">
    <source>
    </source>
</evidence>
<evidence type="ECO:0000269" key="8">
    <source>
    </source>
</evidence>
<evidence type="ECO:0000269" key="9">
    <source>
    </source>
</evidence>
<evidence type="ECO:0000305" key="10"/>
<evidence type="ECO:0007744" key="11">
    <source>
    </source>
</evidence>
<evidence type="ECO:0007744" key="12">
    <source>
    </source>
</evidence>
<sequence length="651" mass="74000">MGKKHKKHKSDRHFYEEYVEKPLKLVLKVGGSEVTELSTGSSGHDSSLFEDRSDHDKHKDRKRKKRKKGEKQAPGEEKGRKRRRVKEDKKKRDRDRAENEVDRDLQCHVPIRLDLPPEKPLTSSLAKQEEVEQTPLQEALNQLMRQLQRKDPSAFFSFPVTDFIAPGYSMIIKHPMDFSTMKEKIKNNDYQSIEELKDNFKLMCTNAMIYNKPETIYYKAAKKLLHSGMKILSQERIQSLKQSIDFMSDLQKTRKQKERTDACQSGEDSGCWQREREDSGDAETQAFRSPAKDNKRKDKDVLEDKWRSSNSEREHEQIERVVQESGGKLTRRLANSQCEFERRKPDGTTTLGLLHPVDPIVGEPGYCPVRLGMTTGRLQSGVNTLQGFKEDKRNRVTPVLYLNYGPYSSYAPHYDSTFANISKDDSDLIYSTYGEDSDLPNNFSISEFLATCQDYPYVMADSLLDVLTKGGHSRSLQDLDMSSPEDEGQTRALDTAKEAEITQIEPTGRLESSSQDRLTALQAVTTFGAPAEVFDSEEAEVFQRKLDETTRLLRELQEAQNERLSTRPPPNMICLLGPSYREMYLAEQVTNNLKELTQQVTPGDVVSIHGVRKAMGISVPSPIVGNSFVDLTGECEEPKETSTAECGPDAS</sequence>
<keyword id="KW-0007">Acetylation</keyword>
<keyword id="KW-0103">Bromodomain</keyword>
<keyword id="KW-0131">Cell cycle</keyword>
<keyword id="KW-0158">Chromosome</keyword>
<keyword id="KW-0175">Coiled coil</keyword>
<keyword id="KW-1017">Isopeptide bond</keyword>
<keyword id="KW-0539">Nucleus</keyword>
<keyword id="KW-0597">Phosphoprotein</keyword>
<keyword id="KW-1185">Reference proteome</keyword>
<keyword id="KW-0804">Transcription</keyword>
<keyword id="KW-0805">Transcription regulation</keyword>
<keyword id="KW-0043">Tumor suppressor</keyword>
<keyword id="KW-0832">Ubl conjugation</keyword>
<keyword id="KW-0879">Wnt signaling pathway</keyword>
<feature type="chain" id="PRO_0000227665" description="Bromodomain-containing protein 7">
    <location>
        <begin position="1"/>
        <end position="651"/>
    </location>
</feature>
<feature type="domain" description="Bromo" evidence="4">
    <location>
        <begin position="131"/>
        <end position="235"/>
    </location>
</feature>
<feature type="region of interest" description="Disordered" evidence="5">
    <location>
        <begin position="34"/>
        <end position="103"/>
    </location>
</feature>
<feature type="region of interest" description="Disordered" evidence="5">
    <location>
        <begin position="252"/>
        <end position="316"/>
    </location>
</feature>
<feature type="coiled-coil region" evidence="3">
    <location>
        <begin position="536"/>
        <end position="567"/>
    </location>
</feature>
<feature type="short sequence motif" description="Nuclear localization signal" evidence="1">
    <location>
        <begin position="65"/>
        <end position="96"/>
    </location>
</feature>
<feature type="compositionally biased region" description="Polar residues" evidence="5">
    <location>
        <begin position="35"/>
        <end position="45"/>
    </location>
</feature>
<feature type="compositionally biased region" description="Basic and acidic residues" evidence="5">
    <location>
        <begin position="47"/>
        <end position="57"/>
    </location>
</feature>
<feature type="compositionally biased region" description="Basic residues" evidence="5">
    <location>
        <begin position="58"/>
        <end position="69"/>
    </location>
</feature>
<feature type="compositionally biased region" description="Basic and acidic residues" evidence="5">
    <location>
        <begin position="70"/>
        <end position="103"/>
    </location>
</feature>
<feature type="compositionally biased region" description="Basic and acidic residues" evidence="5">
    <location>
        <begin position="290"/>
        <end position="316"/>
    </location>
</feature>
<feature type="modified residue" description="Phosphoserine" evidence="11">
    <location>
        <position position="279"/>
    </location>
</feature>
<feature type="modified residue" description="Phosphoserine" evidence="2">
    <location>
        <position position="289"/>
    </location>
</feature>
<feature type="modified residue" description="N6-acetyllysine" evidence="12">
    <location>
        <position position="328"/>
    </location>
</feature>
<feature type="modified residue" description="Phosphoserine" evidence="2">
    <location>
        <position position="380"/>
    </location>
</feature>
<feature type="modified residue" description="Phosphoserine" evidence="11">
    <location>
        <position position="475"/>
    </location>
</feature>
<feature type="modified residue" description="Phosphoserine" evidence="11">
    <location>
        <position position="482"/>
    </location>
</feature>
<feature type="modified residue" description="Phosphoserine" evidence="11">
    <location>
        <position position="483"/>
    </location>
</feature>
<feature type="modified residue" description="Phosphoserine" evidence="2">
    <location>
        <position position="621"/>
    </location>
</feature>
<feature type="cross-link" description="Glycyl lysine isopeptide (Lys-Gly) (interchain with G-Cter in SUMO2)" evidence="2">
    <location>
        <position position="21"/>
    </location>
</feature>
<feature type="cross-link" description="Glycyl lysine isopeptide (Lys-Gly) (interchain with G-Cter in SUMO2)" evidence="2">
    <location>
        <position position="127"/>
    </location>
</feature>
<feature type="cross-link" description="Glycyl lysine isopeptide (Lys-Gly) (interchain with G-Cter in SUMO2)" evidence="2">
    <location>
        <position position="186"/>
    </location>
</feature>
<feature type="cross-link" description="Glycyl lysine isopeptide (Lys-Gly) (interchain with G-Cter in SUMO2)" evidence="2">
    <location>
        <position position="197"/>
    </location>
</feature>
<feature type="cross-link" description="Glycyl lysine isopeptide (Lys-Gly) (interchain with G-Cter in SUMO2)" evidence="2">
    <location>
        <position position="201"/>
    </location>
</feature>
<feature type="cross-link" description="Glycyl lysine isopeptide (Lys-Gly) (interchain with G-Cter in SUMO2)" evidence="2">
    <location>
        <position position="212"/>
    </location>
</feature>
<feature type="cross-link" description="Glycyl lysine isopeptide (Lys-Gly) (interchain with G-Cter in SUMO2)" evidence="2">
    <location>
        <position position="241"/>
    </location>
</feature>
<feature type="cross-link" description="Glycyl lysine isopeptide (Lys-Gly) (interchain with G-Cter in SUMO2)" evidence="2">
    <location>
        <position position="305"/>
    </location>
</feature>
<feature type="cross-link" description="Glycyl lysine isopeptide (Lys-Gly) (interchain with G-Cter in SUMO2)" evidence="2">
    <location>
        <position position="344"/>
    </location>
</feature>
<feature type="cross-link" description="Glycyl lysine isopeptide (Lys-Gly) (interchain with G-Cter in SUMO2)" evidence="2">
    <location>
        <position position="389"/>
    </location>
</feature>
<feature type="sequence conflict" description="In Ref. 2; BAE23823." evidence="10" ref="2">
    <original>D</original>
    <variation>G</variation>
    <location>
        <position position="102"/>
    </location>
</feature>
<organism>
    <name type="scientific">Mus musculus</name>
    <name type="common">Mouse</name>
    <dbReference type="NCBI Taxonomy" id="10090"/>
    <lineage>
        <taxon>Eukaryota</taxon>
        <taxon>Metazoa</taxon>
        <taxon>Chordata</taxon>
        <taxon>Craniata</taxon>
        <taxon>Vertebrata</taxon>
        <taxon>Euteleostomi</taxon>
        <taxon>Mammalia</taxon>
        <taxon>Eutheria</taxon>
        <taxon>Euarchontoglires</taxon>
        <taxon>Glires</taxon>
        <taxon>Rodentia</taxon>
        <taxon>Myomorpha</taxon>
        <taxon>Muroidea</taxon>
        <taxon>Muridae</taxon>
        <taxon>Murinae</taxon>
        <taxon>Mus</taxon>
        <taxon>Mus</taxon>
    </lineage>
</organism>
<reference key="1">
    <citation type="journal article" date="1999" name="FEBS Lett.">
        <title>Identification and molecular characterization of BP75, a novel bromodomain-containing protein.</title>
        <authorList>
            <person name="Cuppen E."/>
            <person name="van Ham M."/>
            <person name="Pepers B."/>
            <person name="Wieringa B."/>
            <person name="Hendriks W."/>
        </authorList>
    </citation>
    <scope>NUCLEOTIDE SEQUENCE [MRNA]</scope>
    <scope>INTERACTION WITH PTPN13</scope>
    <scope>TISSUE SPECIFICITY</scope>
    <scope>SUBCELLULAR LOCATION</scope>
    <scope>DEVELOPMENTAL STAGE</scope>
    <source>
        <strain>BALB/cJ</strain>
        <tissue>Brain</tissue>
    </source>
</reference>
<reference key="2">
    <citation type="journal article" date="2005" name="Science">
        <title>The transcriptional landscape of the mammalian genome.</title>
        <authorList>
            <person name="Carninci P."/>
            <person name="Kasukawa T."/>
            <person name="Katayama S."/>
            <person name="Gough J."/>
            <person name="Frith M.C."/>
            <person name="Maeda N."/>
            <person name="Oyama R."/>
            <person name="Ravasi T."/>
            <person name="Lenhard B."/>
            <person name="Wells C."/>
            <person name="Kodzius R."/>
            <person name="Shimokawa K."/>
            <person name="Bajic V.B."/>
            <person name="Brenner S.E."/>
            <person name="Batalov S."/>
            <person name="Forrest A.R."/>
            <person name="Zavolan M."/>
            <person name="Davis M.J."/>
            <person name="Wilming L.G."/>
            <person name="Aidinis V."/>
            <person name="Allen J.E."/>
            <person name="Ambesi-Impiombato A."/>
            <person name="Apweiler R."/>
            <person name="Aturaliya R.N."/>
            <person name="Bailey T.L."/>
            <person name="Bansal M."/>
            <person name="Baxter L."/>
            <person name="Beisel K.W."/>
            <person name="Bersano T."/>
            <person name="Bono H."/>
            <person name="Chalk A.M."/>
            <person name="Chiu K.P."/>
            <person name="Choudhary V."/>
            <person name="Christoffels A."/>
            <person name="Clutterbuck D.R."/>
            <person name="Crowe M.L."/>
            <person name="Dalla E."/>
            <person name="Dalrymple B.P."/>
            <person name="de Bono B."/>
            <person name="Della Gatta G."/>
            <person name="di Bernardo D."/>
            <person name="Down T."/>
            <person name="Engstrom P."/>
            <person name="Fagiolini M."/>
            <person name="Faulkner G."/>
            <person name="Fletcher C.F."/>
            <person name="Fukushima T."/>
            <person name="Furuno M."/>
            <person name="Futaki S."/>
            <person name="Gariboldi M."/>
            <person name="Georgii-Hemming P."/>
            <person name="Gingeras T.R."/>
            <person name="Gojobori T."/>
            <person name="Green R.E."/>
            <person name="Gustincich S."/>
            <person name="Harbers M."/>
            <person name="Hayashi Y."/>
            <person name="Hensch T.K."/>
            <person name="Hirokawa N."/>
            <person name="Hill D."/>
            <person name="Huminiecki L."/>
            <person name="Iacono M."/>
            <person name="Ikeo K."/>
            <person name="Iwama A."/>
            <person name="Ishikawa T."/>
            <person name="Jakt M."/>
            <person name="Kanapin A."/>
            <person name="Katoh M."/>
            <person name="Kawasawa Y."/>
            <person name="Kelso J."/>
            <person name="Kitamura H."/>
            <person name="Kitano H."/>
            <person name="Kollias G."/>
            <person name="Krishnan S.P."/>
            <person name="Kruger A."/>
            <person name="Kummerfeld S.K."/>
            <person name="Kurochkin I.V."/>
            <person name="Lareau L.F."/>
            <person name="Lazarevic D."/>
            <person name="Lipovich L."/>
            <person name="Liu J."/>
            <person name="Liuni S."/>
            <person name="McWilliam S."/>
            <person name="Madan Babu M."/>
            <person name="Madera M."/>
            <person name="Marchionni L."/>
            <person name="Matsuda H."/>
            <person name="Matsuzawa S."/>
            <person name="Miki H."/>
            <person name="Mignone F."/>
            <person name="Miyake S."/>
            <person name="Morris K."/>
            <person name="Mottagui-Tabar S."/>
            <person name="Mulder N."/>
            <person name="Nakano N."/>
            <person name="Nakauchi H."/>
            <person name="Ng P."/>
            <person name="Nilsson R."/>
            <person name="Nishiguchi S."/>
            <person name="Nishikawa S."/>
            <person name="Nori F."/>
            <person name="Ohara O."/>
            <person name="Okazaki Y."/>
            <person name="Orlando V."/>
            <person name="Pang K.C."/>
            <person name="Pavan W.J."/>
            <person name="Pavesi G."/>
            <person name="Pesole G."/>
            <person name="Petrovsky N."/>
            <person name="Piazza S."/>
            <person name="Reed J."/>
            <person name="Reid J.F."/>
            <person name="Ring B.Z."/>
            <person name="Ringwald M."/>
            <person name="Rost B."/>
            <person name="Ruan Y."/>
            <person name="Salzberg S.L."/>
            <person name="Sandelin A."/>
            <person name="Schneider C."/>
            <person name="Schoenbach C."/>
            <person name="Sekiguchi K."/>
            <person name="Semple C.A."/>
            <person name="Seno S."/>
            <person name="Sessa L."/>
            <person name="Sheng Y."/>
            <person name="Shibata Y."/>
            <person name="Shimada H."/>
            <person name="Shimada K."/>
            <person name="Silva D."/>
            <person name="Sinclair B."/>
            <person name="Sperling S."/>
            <person name="Stupka E."/>
            <person name="Sugiura K."/>
            <person name="Sultana R."/>
            <person name="Takenaka Y."/>
            <person name="Taki K."/>
            <person name="Tammoja K."/>
            <person name="Tan S.L."/>
            <person name="Tang S."/>
            <person name="Taylor M.S."/>
            <person name="Tegner J."/>
            <person name="Teichmann S.A."/>
            <person name="Ueda H.R."/>
            <person name="van Nimwegen E."/>
            <person name="Verardo R."/>
            <person name="Wei C.L."/>
            <person name="Yagi K."/>
            <person name="Yamanishi H."/>
            <person name="Zabarovsky E."/>
            <person name="Zhu S."/>
            <person name="Zimmer A."/>
            <person name="Hide W."/>
            <person name="Bult C."/>
            <person name="Grimmond S.M."/>
            <person name="Teasdale R.D."/>
            <person name="Liu E.T."/>
            <person name="Brusic V."/>
            <person name="Quackenbush J."/>
            <person name="Wahlestedt C."/>
            <person name="Mattick J.S."/>
            <person name="Hume D.A."/>
            <person name="Kai C."/>
            <person name="Sasaki D."/>
            <person name="Tomaru Y."/>
            <person name="Fukuda S."/>
            <person name="Kanamori-Katayama M."/>
            <person name="Suzuki M."/>
            <person name="Aoki J."/>
            <person name="Arakawa T."/>
            <person name="Iida J."/>
            <person name="Imamura K."/>
            <person name="Itoh M."/>
            <person name="Kato T."/>
            <person name="Kawaji H."/>
            <person name="Kawagashira N."/>
            <person name="Kawashima T."/>
            <person name="Kojima M."/>
            <person name="Kondo S."/>
            <person name="Konno H."/>
            <person name="Nakano K."/>
            <person name="Ninomiya N."/>
            <person name="Nishio T."/>
            <person name="Okada M."/>
            <person name="Plessy C."/>
            <person name="Shibata K."/>
            <person name="Shiraki T."/>
            <person name="Suzuki S."/>
            <person name="Tagami M."/>
            <person name="Waki K."/>
            <person name="Watahiki A."/>
            <person name="Okamura-Oho Y."/>
            <person name="Suzuki H."/>
            <person name="Kawai J."/>
            <person name="Hayashizaki Y."/>
        </authorList>
    </citation>
    <scope>NUCLEOTIDE SEQUENCE [LARGE SCALE MRNA] OF 1-293 AND 478-651</scope>
    <source>
        <strain>C57BL/6J</strain>
        <tissue>Aorta</tissue>
        <tissue>Embryo</tissue>
        <tissue>Fetal head</tissue>
        <tissue>Vein</tissue>
    </source>
</reference>
<reference key="3">
    <citation type="journal article" date="2003" name="Cancer Res.">
        <title>BP75, bromodomain-containing M(r) 75,000 protein, binds dishevelled-1 and enhances Wnt signaling by inactivating glycogen synthase kinase-3 beta.</title>
        <authorList>
            <person name="Kim S."/>
            <person name="Lee J."/>
            <person name="Park J."/>
            <person name="Chung J."/>
        </authorList>
    </citation>
    <scope>FUNCTION</scope>
    <scope>INTERACTION WITH DVL1</scope>
</reference>
<reference key="4">
    <citation type="journal article" date="2008" name="J. Biol. Chem.">
        <title>BRD7, a novel PBAF-specific SWI/SNF subunit, is required for target gene activation and repression in embryonic stem cells.</title>
        <authorList>
            <person name="Kaeser M.D."/>
            <person name="Aslanian A."/>
            <person name="Dong M.Q."/>
            <person name="Yates J.R. III"/>
            <person name="Emerson B.M."/>
        </authorList>
    </citation>
    <scope>FUNCTION</scope>
    <scope>IDENTIFICATION BY MASS SPECTROMETRY</scope>
    <scope>IDENTIFICATION IN A COMPLEX WITH SMARCA4/BRG1; SMARCE1/BAF57; DPF2/BAF45D; SMARCC1/BAF155 AND ARID2</scope>
</reference>
<reference key="5">
    <citation type="journal article" date="2009" name="Biochim. Biophys. Acta">
        <title>TRIM24 mediates ligand-dependent activation of androgen receptor and is repressed by a bromodomain-containing protein, BRD7, in prostate cancer cells.</title>
        <authorList>
            <person name="Kikuchi M."/>
            <person name="Okumura F."/>
            <person name="Tsukiyama T."/>
            <person name="Watanabe M."/>
            <person name="Miyajima N."/>
            <person name="Tanaka J."/>
            <person name="Imamura M."/>
            <person name="Hatakeyama S."/>
        </authorList>
    </citation>
    <scope>INTERACTION WITH TRIM24</scope>
    <scope>FUNCTION</scope>
    <scope>SUBCELLULAR LOCATION</scope>
</reference>
<reference key="6">
    <citation type="journal article" date="2010" name="Cell">
        <title>A tissue-specific atlas of mouse protein phosphorylation and expression.</title>
        <authorList>
            <person name="Huttlin E.L."/>
            <person name="Jedrychowski M.P."/>
            <person name="Elias J.E."/>
            <person name="Goswami T."/>
            <person name="Rad R."/>
            <person name="Beausoleil S.A."/>
            <person name="Villen J."/>
            <person name="Haas W."/>
            <person name="Sowa M.E."/>
            <person name="Gygi S.P."/>
        </authorList>
    </citation>
    <scope>PHOSPHORYLATION [LARGE SCALE ANALYSIS] AT SER-279; SER-475; SER-482 AND SER-483</scope>
    <scope>IDENTIFICATION BY MASS SPECTROMETRY [LARGE SCALE ANALYSIS]</scope>
    <source>
        <tissue>Brain</tissue>
        <tissue>Brown adipose tissue</tissue>
        <tissue>Kidney</tissue>
        <tissue>Lung</tissue>
        <tissue>Pancreas</tissue>
        <tissue>Spleen</tissue>
        <tissue>Testis</tissue>
    </source>
</reference>
<reference key="7">
    <citation type="journal article" date="2013" name="Mol. Cell">
        <title>SIRT5-mediated lysine desuccinylation impacts diverse metabolic pathways.</title>
        <authorList>
            <person name="Park J."/>
            <person name="Chen Y."/>
            <person name="Tishkoff D.X."/>
            <person name="Peng C."/>
            <person name="Tan M."/>
            <person name="Dai L."/>
            <person name="Xie Z."/>
            <person name="Zhang Y."/>
            <person name="Zwaans B.M."/>
            <person name="Skinner M.E."/>
            <person name="Lombard D.B."/>
            <person name="Zhao Y."/>
        </authorList>
    </citation>
    <scope>ACETYLATION [LARGE SCALE ANALYSIS] AT LYS-328</scope>
    <scope>IDENTIFICATION BY MASS SPECTROMETRY [LARGE SCALE ANALYSIS]</scope>
    <source>
        <tissue>Embryonic fibroblast</tissue>
    </source>
</reference>
<dbReference type="EMBL" id="AF084259">
    <property type="protein sequence ID" value="AAC33302.1"/>
    <property type="molecule type" value="mRNA"/>
</dbReference>
<dbReference type="EMBL" id="AK004429">
    <property type="protein sequence ID" value="BAB23299.1"/>
    <property type="molecule type" value="mRNA"/>
</dbReference>
<dbReference type="EMBL" id="AK138934">
    <property type="protein sequence ID" value="BAE23823.1"/>
    <property type="status" value="ALT_INIT"/>
    <property type="molecule type" value="mRNA"/>
</dbReference>
<dbReference type="EMBL" id="AK142758">
    <property type="protein sequence ID" value="BAE25187.1"/>
    <property type="molecule type" value="mRNA"/>
</dbReference>
<dbReference type="CCDS" id="CCDS22510.1"/>
<dbReference type="RefSeq" id="NP_001363945.1">
    <property type="nucleotide sequence ID" value="NM_001377016.1"/>
</dbReference>
<dbReference type="RefSeq" id="NP_036177.1">
    <property type="nucleotide sequence ID" value="NM_012047.3"/>
</dbReference>
<dbReference type="RefSeq" id="XP_017168329.1">
    <property type="nucleotide sequence ID" value="XM_017312840.1"/>
</dbReference>
<dbReference type="BMRB" id="O88665"/>
<dbReference type="SMR" id="O88665"/>
<dbReference type="BioGRID" id="205094">
    <property type="interactions" value="8"/>
</dbReference>
<dbReference type="ComplexPortal" id="CPX-1248">
    <property type="entry name" value="Polybromo-associated SWI/SNF ATP-dependent chromatin remodeling complex, ACTL6A variant"/>
</dbReference>
<dbReference type="ComplexPortal" id="CPX-1250">
    <property type="entry name" value="Polybromo-associated SWI/SNF ATP-dependent chromatin remodeling complex, ACTL6B variant"/>
</dbReference>
<dbReference type="FunCoup" id="O88665">
    <property type="interactions" value="4071"/>
</dbReference>
<dbReference type="IntAct" id="O88665">
    <property type="interactions" value="4"/>
</dbReference>
<dbReference type="MINT" id="O88665"/>
<dbReference type="STRING" id="10090.ENSMUSP00000034085"/>
<dbReference type="ChEMBL" id="CHEMBL3822348"/>
<dbReference type="GlyGen" id="O88665">
    <property type="glycosylation" value="2 sites"/>
</dbReference>
<dbReference type="iPTMnet" id="O88665"/>
<dbReference type="PhosphoSitePlus" id="O88665"/>
<dbReference type="jPOST" id="O88665"/>
<dbReference type="PaxDb" id="10090-ENSMUSP00000034085"/>
<dbReference type="PeptideAtlas" id="O88665"/>
<dbReference type="ProteomicsDB" id="265378"/>
<dbReference type="Pumba" id="O88665"/>
<dbReference type="Antibodypedia" id="14527">
    <property type="antibodies" value="234 antibodies from 32 providers"/>
</dbReference>
<dbReference type="DNASU" id="26992"/>
<dbReference type="Ensembl" id="ENSMUST00000034085.8">
    <property type="protein sequence ID" value="ENSMUSP00000034085.8"/>
    <property type="gene ID" value="ENSMUSG00000031660.15"/>
</dbReference>
<dbReference type="GeneID" id="26992"/>
<dbReference type="KEGG" id="mmu:26992"/>
<dbReference type="UCSC" id="uc009mrn.2">
    <property type="organism name" value="mouse"/>
</dbReference>
<dbReference type="AGR" id="MGI:1349766"/>
<dbReference type="CTD" id="29117"/>
<dbReference type="MGI" id="MGI:1349766">
    <property type="gene designation" value="Brd7"/>
</dbReference>
<dbReference type="VEuPathDB" id="HostDB:ENSMUSG00000031660"/>
<dbReference type="eggNOG" id="KOG1828">
    <property type="taxonomic scope" value="Eukaryota"/>
</dbReference>
<dbReference type="GeneTree" id="ENSGT00950000183170"/>
<dbReference type="HOGENOM" id="CLU_020704_0_1_1"/>
<dbReference type="InParanoid" id="O88665"/>
<dbReference type="OMA" id="HQGHRER"/>
<dbReference type="OrthoDB" id="21648at2759"/>
<dbReference type="PhylomeDB" id="O88665"/>
<dbReference type="TreeFam" id="TF106439"/>
<dbReference type="Reactome" id="R-MMU-6804758">
    <property type="pathway name" value="Regulation of TP53 Activity through Acetylation"/>
</dbReference>
<dbReference type="BioGRID-ORCS" id="26992">
    <property type="hits" value="5 hits in 86 CRISPR screens"/>
</dbReference>
<dbReference type="ChiTaRS" id="Brd7">
    <property type="organism name" value="mouse"/>
</dbReference>
<dbReference type="PRO" id="PR:O88665"/>
<dbReference type="Proteomes" id="UP000000589">
    <property type="component" value="Chromosome 8"/>
</dbReference>
<dbReference type="RNAct" id="O88665">
    <property type="molecule type" value="protein"/>
</dbReference>
<dbReference type="Bgee" id="ENSMUSG00000031660">
    <property type="expression patterns" value="Expressed in undifferentiated genital tubercle and 285 other cell types or tissues"/>
</dbReference>
<dbReference type="GO" id="GO:0000785">
    <property type="term" value="C:chromatin"/>
    <property type="evidence" value="ECO:0000303"/>
    <property type="project" value="ComplexPortal"/>
</dbReference>
<dbReference type="GO" id="GO:0005829">
    <property type="term" value="C:cytosol"/>
    <property type="evidence" value="ECO:0007669"/>
    <property type="project" value="Ensembl"/>
</dbReference>
<dbReference type="GO" id="GO:0000776">
    <property type="term" value="C:kinetochore"/>
    <property type="evidence" value="ECO:0000303"/>
    <property type="project" value="ComplexPortal"/>
</dbReference>
<dbReference type="GO" id="GO:0016363">
    <property type="term" value="C:nuclear matrix"/>
    <property type="evidence" value="ECO:0000303"/>
    <property type="project" value="ComplexPortal"/>
</dbReference>
<dbReference type="GO" id="GO:0005654">
    <property type="term" value="C:nucleoplasm"/>
    <property type="evidence" value="ECO:0007669"/>
    <property type="project" value="Ensembl"/>
</dbReference>
<dbReference type="GO" id="GO:0005634">
    <property type="term" value="C:nucleus"/>
    <property type="evidence" value="ECO:0000353"/>
    <property type="project" value="MGI"/>
</dbReference>
<dbReference type="GO" id="GO:0016586">
    <property type="term" value="C:RSC-type complex"/>
    <property type="evidence" value="ECO:0000303"/>
    <property type="project" value="ComplexPortal"/>
</dbReference>
<dbReference type="GO" id="GO:0042393">
    <property type="term" value="F:histone binding"/>
    <property type="evidence" value="ECO:0000266"/>
    <property type="project" value="MGI"/>
</dbReference>
<dbReference type="GO" id="GO:0140015">
    <property type="term" value="F:histone H3K14ac reader activity"/>
    <property type="evidence" value="ECO:0000250"/>
    <property type="project" value="UniProtKB"/>
</dbReference>
<dbReference type="GO" id="GO:0002039">
    <property type="term" value="F:p53 binding"/>
    <property type="evidence" value="ECO:0000250"/>
    <property type="project" value="UniProtKB"/>
</dbReference>
<dbReference type="GO" id="GO:0000976">
    <property type="term" value="F:transcription cis-regulatory region binding"/>
    <property type="evidence" value="ECO:0007669"/>
    <property type="project" value="Ensembl"/>
</dbReference>
<dbReference type="GO" id="GO:0003713">
    <property type="term" value="F:transcription coactivator activity"/>
    <property type="evidence" value="ECO:0000250"/>
    <property type="project" value="UniProtKB"/>
</dbReference>
<dbReference type="GO" id="GO:0003714">
    <property type="term" value="F:transcription corepressor activity"/>
    <property type="evidence" value="ECO:0000314"/>
    <property type="project" value="UniProtKB"/>
</dbReference>
<dbReference type="GO" id="GO:0006338">
    <property type="term" value="P:chromatin remodeling"/>
    <property type="evidence" value="ECO:0000303"/>
    <property type="project" value="ComplexPortal"/>
</dbReference>
<dbReference type="GO" id="GO:0045892">
    <property type="term" value="P:negative regulation of DNA-templated transcription"/>
    <property type="evidence" value="ECO:0000250"/>
    <property type="project" value="UniProtKB"/>
</dbReference>
<dbReference type="GO" id="GO:2000134">
    <property type="term" value="P:negative regulation of G1/S transition of mitotic cell cycle"/>
    <property type="evidence" value="ECO:0000250"/>
    <property type="project" value="UniProtKB"/>
</dbReference>
<dbReference type="GO" id="GO:0045597">
    <property type="term" value="P:positive regulation of cell differentiation"/>
    <property type="evidence" value="ECO:0000303"/>
    <property type="project" value="ComplexPortal"/>
</dbReference>
<dbReference type="GO" id="GO:2000781">
    <property type="term" value="P:positive regulation of double-strand break repair"/>
    <property type="evidence" value="ECO:0000303"/>
    <property type="project" value="ComplexPortal"/>
</dbReference>
<dbReference type="GO" id="GO:0045663">
    <property type="term" value="P:positive regulation of myoblast differentiation"/>
    <property type="evidence" value="ECO:0000303"/>
    <property type="project" value="ComplexPortal"/>
</dbReference>
<dbReference type="GO" id="GO:0045582">
    <property type="term" value="P:positive regulation of T cell differentiation"/>
    <property type="evidence" value="ECO:0000303"/>
    <property type="project" value="ComplexPortal"/>
</dbReference>
<dbReference type="GO" id="GO:0070316">
    <property type="term" value="P:regulation of G0 to G1 transition"/>
    <property type="evidence" value="ECO:0000303"/>
    <property type="project" value="ComplexPortal"/>
</dbReference>
<dbReference type="GO" id="GO:2000045">
    <property type="term" value="P:regulation of G1/S transition of mitotic cell cycle"/>
    <property type="evidence" value="ECO:0000303"/>
    <property type="project" value="ComplexPortal"/>
</dbReference>
<dbReference type="GO" id="GO:0030071">
    <property type="term" value="P:regulation of mitotic metaphase/anaphase transition"/>
    <property type="evidence" value="ECO:0000303"/>
    <property type="project" value="ComplexPortal"/>
</dbReference>
<dbReference type="GO" id="GO:2000819">
    <property type="term" value="P:regulation of nucleotide-excision repair"/>
    <property type="evidence" value="ECO:0000303"/>
    <property type="project" value="ComplexPortal"/>
</dbReference>
<dbReference type="GO" id="GO:0006357">
    <property type="term" value="P:regulation of transcription by RNA polymerase II"/>
    <property type="evidence" value="ECO:0000266"/>
    <property type="project" value="MGI"/>
</dbReference>
<dbReference type="GO" id="GO:0045815">
    <property type="term" value="P:transcription initiation-coupled chromatin remodeling"/>
    <property type="evidence" value="ECO:0000250"/>
    <property type="project" value="UniProtKB"/>
</dbReference>
<dbReference type="GO" id="GO:0016055">
    <property type="term" value="P:Wnt signaling pathway"/>
    <property type="evidence" value="ECO:0007669"/>
    <property type="project" value="UniProtKB-KW"/>
</dbReference>
<dbReference type="CDD" id="cd05513">
    <property type="entry name" value="Bromo_brd7_like"/>
    <property type="match status" value="1"/>
</dbReference>
<dbReference type="FunFam" id="1.20.920.10:FF:000022">
    <property type="entry name" value="Putative bromodomain-containing protein 9"/>
    <property type="match status" value="1"/>
</dbReference>
<dbReference type="Gene3D" id="1.20.920.10">
    <property type="entry name" value="Bromodomain-like"/>
    <property type="match status" value="1"/>
</dbReference>
<dbReference type="InterPro" id="IPR001487">
    <property type="entry name" value="Bromodomain"/>
</dbReference>
<dbReference type="InterPro" id="IPR036427">
    <property type="entry name" value="Bromodomain-like_sf"/>
</dbReference>
<dbReference type="InterPro" id="IPR051831">
    <property type="entry name" value="Bromodomain_contain_prot"/>
</dbReference>
<dbReference type="InterPro" id="IPR021900">
    <property type="entry name" value="DUF3512"/>
</dbReference>
<dbReference type="PANTHER" id="PTHR22881">
    <property type="entry name" value="BROMODOMAIN CONTAINING PROTEIN"/>
    <property type="match status" value="1"/>
</dbReference>
<dbReference type="PANTHER" id="PTHR22881:SF12">
    <property type="entry name" value="BROMODOMAIN-CONTAINING PROTEIN 7"/>
    <property type="match status" value="1"/>
</dbReference>
<dbReference type="Pfam" id="PF00439">
    <property type="entry name" value="Bromodomain"/>
    <property type="match status" value="1"/>
</dbReference>
<dbReference type="Pfam" id="PF12024">
    <property type="entry name" value="DUF3512"/>
    <property type="match status" value="1"/>
</dbReference>
<dbReference type="PRINTS" id="PR00503">
    <property type="entry name" value="BROMODOMAIN"/>
</dbReference>
<dbReference type="SMART" id="SM00297">
    <property type="entry name" value="BROMO"/>
    <property type="match status" value="1"/>
</dbReference>
<dbReference type="SUPFAM" id="SSF47370">
    <property type="entry name" value="Bromodomain"/>
    <property type="match status" value="1"/>
</dbReference>
<dbReference type="PROSITE" id="PS50014">
    <property type="entry name" value="BROMODOMAIN_2"/>
    <property type="match status" value="1"/>
</dbReference>
<proteinExistence type="evidence at protein level"/>
<comment type="function">
    <text evidence="1 7 8 9">Acts both as coactivator and as corepressor. May play a role in chromatin remodeling. Transcriptional corepressor that down-regulates the expression of target genes. Binds to target promoters, leading to increased histone H3 acetylation at 'Lys-9' (H3K9ac). Binds to the ESR1 promoter. Recruits BRCA1 and POU2F1 to the ESR1 promoter. Coactivator for TP53-mediated activation of transcription of a set of target genes. Required for TP53-mediated cell-cycle arrest in response to oncogene activation. Promotes acetylation of TP53 at 'Lys-382', and thereby promotes efficient recruitment of TP53 to target promoters. Inhibits cell cycle progression from G1 to S phase (By similarity). Activator of the Wnt signaling pathway in a DVL1-dependent manner by negatively regulating the GSK3B phosphotransferase activity. Induces dephosphorylation of GSK3B at 'Tyr-216'. Down-regulates TRIM24-mediated activation of transcriptional activation by AR.</text>
</comment>
<comment type="subunit">
    <text evidence="1 6 7 8 9">Interacts with IRF2 and HNRPUL1 (By similarity). Interacts (via N-terminus) with TP53. Interacts (via C-terminus) with EP300. Interacts with BRCA1. Interacts (via bromo domain) with histone H3 (via N-terminus) acetylated at 'Lys-14' (H3K14ac). Has low affinity for histone H3 acetylated at 'Lys-9' (H3K9ac). Has the highest affinity for histone H3 that is acetylated both at 'Lys-9' (H3K9ac) and at 'Lys-14' (H3K14ac). Has very low affinity for non-acetylated histone H3. Interacts (via bromo domain) with histone H4 (via N-terminus) acetylated at 'Lys-8' (H3K8ac) (in vitro) (By similarity). Interacts with TRIM24, PTPN13 and DVL1. Identified in a complex with SMARCA4/BRG1, SMARCC1/BAF155, SMARCE1/BAF57, DPF2/BAF45D and ARID2, subunits of the SWI/SNF-B (PBAF) chromatin remodeling complex.</text>
</comment>
<comment type="interaction">
    <interactant intactId="EBI-643930">
        <id>O88665</id>
    </interactant>
    <interactant intactId="EBI-641764">
        <id>P26450</id>
        <label>Pik3r1</label>
    </interactant>
    <organismsDiffer>false</organismsDiffer>
    <experiments>11</experiments>
</comment>
<comment type="interaction">
    <interactant intactId="EBI-643930">
        <id>O88665</id>
    </interactant>
    <interactant intactId="EBI-643570">
        <id>O08908</id>
        <label>Pik3r2</label>
    </interactant>
    <organismsDiffer>false</organismsDiffer>
    <experiments>4</experiments>
</comment>
<comment type="interaction">
    <interactant intactId="EBI-643930">
        <id>O88665</id>
    </interactant>
    <interactant intactId="EBI-4284057">
        <id>Q64512</id>
        <label>Ptpn13</label>
    </interactant>
    <organismsDiffer>false</organismsDiffer>
    <experiments>3</experiments>
</comment>
<comment type="subcellular location">
    <subcellularLocation>
        <location evidence="6 9">Nucleus</location>
    </subcellularLocation>
    <subcellularLocation>
        <location evidence="2">Chromosome</location>
    </subcellularLocation>
</comment>
<comment type="tissue specificity">
    <text evidence="6">Ubiquitous.</text>
</comment>
<comment type="developmental stage">
    <text evidence="6">Expressed ubiquitously from 10.5 to 18.5 dpc.</text>
</comment>
<comment type="sequence caution" evidence="10">
    <conflict type="erroneous initiation">
        <sequence resource="EMBL-CDS" id="BAE23823"/>
    </conflict>
</comment>